<feature type="chain" id="PRO_0000386733" description="Ribosomal RNA small subunit methyltransferase H">
    <location>
        <begin position="1"/>
        <end position="310"/>
    </location>
</feature>
<feature type="binding site" evidence="1">
    <location>
        <begin position="32"/>
        <end position="34"/>
    </location>
    <ligand>
        <name>S-adenosyl-L-methionine</name>
        <dbReference type="ChEBI" id="CHEBI:59789"/>
    </ligand>
</feature>
<feature type="binding site" evidence="1">
    <location>
        <position position="52"/>
    </location>
    <ligand>
        <name>S-adenosyl-L-methionine</name>
        <dbReference type="ChEBI" id="CHEBI:59789"/>
    </ligand>
</feature>
<feature type="binding site" evidence="1">
    <location>
        <position position="79"/>
    </location>
    <ligand>
        <name>S-adenosyl-L-methionine</name>
        <dbReference type="ChEBI" id="CHEBI:59789"/>
    </ligand>
</feature>
<feature type="binding site" evidence="1">
    <location>
        <position position="100"/>
    </location>
    <ligand>
        <name>S-adenosyl-L-methionine</name>
        <dbReference type="ChEBI" id="CHEBI:59789"/>
    </ligand>
</feature>
<feature type="binding site" evidence="1">
    <location>
        <position position="107"/>
    </location>
    <ligand>
        <name>S-adenosyl-L-methionine</name>
        <dbReference type="ChEBI" id="CHEBI:59789"/>
    </ligand>
</feature>
<dbReference type="EC" id="2.1.1.199" evidence="1"/>
<dbReference type="EMBL" id="CP000227">
    <property type="protein sequence ID" value="ACM14132.1"/>
    <property type="molecule type" value="Genomic_DNA"/>
</dbReference>
<dbReference type="SMR" id="B9IVZ5"/>
<dbReference type="KEGG" id="bcq:BCQ_3704"/>
<dbReference type="HOGENOM" id="CLU_038422_2_0_9"/>
<dbReference type="Proteomes" id="UP000000441">
    <property type="component" value="Chromosome"/>
</dbReference>
<dbReference type="GO" id="GO:0005737">
    <property type="term" value="C:cytoplasm"/>
    <property type="evidence" value="ECO:0007669"/>
    <property type="project" value="UniProtKB-SubCell"/>
</dbReference>
<dbReference type="GO" id="GO:0071424">
    <property type="term" value="F:rRNA (cytosine-N4-)-methyltransferase activity"/>
    <property type="evidence" value="ECO:0007669"/>
    <property type="project" value="UniProtKB-UniRule"/>
</dbReference>
<dbReference type="GO" id="GO:0070475">
    <property type="term" value="P:rRNA base methylation"/>
    <property type="evidence" value="ECO:0007669"/>
    <property type="project" value="UniProtKB-UniRule"/>
</dbReference>
<dbReference type="FunFam" id="1.10.150.170:FF:000001">
    <property type="entry name" value="Ribosomal RNA small subunit methyltransferase H"/>
    <property type="match status" value="1"/>
</dbReference>
<dbReference type="Gene3D" id="1.10.150.170">
    <property type="entry name" value="Putative methyltransferase TM0872, insert domain"/>
    <property type="match status" value="1"/>
</dbReference>
<dbReference type="Gene3D" id="3.40.50.150">
    <property type="entry name" value="Vaccinia Virus protein VP39"/>
    <property type="match status" value="1"/>
</dbReference>
<dbReference type="HAMAP" id="MF_01007">
    <property type="entry name" value="16SrRNA_methyltr_H"/>
    <property type="match status" value="1"/>
</dbReference>
<dbReference type="InterPro" id="IPR002903">
    <property type="entry name" value="RsmH"/>
</dbReference>
<dbReference type="InterPro" id="IPR023397">
    <property type="entry name" value="SAM-dep_MeTrfase_MraW_recog"/>
</dbReference>
<dbReference type="InterPro" id="IPR029063">
    <property type="entry name" value="SAM-dependent_MTases_sf"/>
</dbReference>
<dbReference type="NCBIfam" id="TIGR00006">
    <property type="entry name" value="16S rRNA (cytosine(1402)-N(4))-methyltransferase RsmH"/>
    <property type="match status" value="1"/>
</dbReference>
<dbReference type="PANTHER" id="PTHR11265:SF0">
    <property type="entry name" value="12S RRNA N4-METHYLCYTIDINE METHYLTRANSFERASE"/>
    <property type="match status" value="1"/>
</dbReference>
<dbReference type="PANTHER" id="PTHR11265">
    <property type="entry name" value="S-ADENOSYL-METHYLTRANSFERASE MRAW"/>
    <property type="match status" value="1"/>
</dbReference>
<dbReference type="Pfam" id="PF01795">
    <property type="entry name" value="Methyltransf_5"/>
    <property type="match status" value="1"/>
</dbReference>
<dbReference type="PIRSF" id="PIRSF004486">
    <property type="entry name" value="MraW"/>
    <property type="match status" value="1"/>
</dbReference>
<dbReference type="SUPFAM" id="SSF81799">
    <property type="entry name" value="Putative methyltransferase TM0872, insert domain"/>
    <property type="match status" value="1"/>
</dbReference>
<dbReference type="SUPFAM" id="SSF53335">
    <property type="entry name" value="S-adenosyl-L-methionine-dependent methyltransferases"/>
    <property type="match status" value="1"/>
</dbReference>
<reference key="1">
    <citation type="journal article" date="2009" name="J. Bacteriol.">
        <title>Complete genome sequence of the extremophilic Bacillus cereus strain Q1 with industrial applications.</title>
        <authorList>
            <person name="Xiong Z."/>
            <person name="Jiang Y."/>
            <person name="Qi D."/>
            <person name="Lu H."/>
            <person name="Yang F."/>
            <person name="Yang J."/>
            <person name="Chen L."/>
            <person name="Sun L."/>
            <person name="Xu X."/>
            <person name="Xue Y."/>
            <person name="Zhu Y."/>
            <person name="Jin Q."/>
        </authorList>
    </citation>
    <scope>NUCLEOTIDE SEQUENCE [LARGE SCALE GENOMIC DNA]</scope>
    <source>
        <strain>Q1</strain>
    </source>
</reference>
<comment type="function">
    <text evidence="1">Specifically methylates the N4 position of cytidine in position 1402 (C1402) of 16S rRNA.</text>
</comment>
<comment type="catalytic activity">
    <reaction evidence="1">
        <text>cytidine(1402) in 16S rRNA + S-adenosyl-L-methionine = N(4)-methylcytidine(1402) in 16S rRNA + S-adenosyl-L-homocysteine + H(+)</text>
        <dbReference type="Rhea" id="RHEA:42928"/>
        <dbReference type="Rhea" id="RHEA-COMP:10286"/>
        <dbReference type="Rhea" id="RHEA-COMP:10287"/>
        <dbReference type="ChEBI" id="CHEBI:15378"/>
        <dbReference type="ChEBI" id="CHEBI:57856"/>
        <dbReference type="ChEBI" id="CHEBI:59789"/>
        <dbReference type="ChEBI" id="CHEBI:74506"/>
        <dbReference type="ChEBI" id="CHEBI:82748"/>
        <dbReference type="EC" id="2.1.1.199"/>
    </reaction>
</comment>
<comment type="subcellular location">
    <subcellularLocation>
        <location evidence="1">Cytoplasm</location>
    </subcellularLocation>
</comment>
<comment type="similarity">
    <text evidence="1">Belongs to the methyltransferase superfamily. RsmH family.</text>
</comment>
<protein>
    <recommendedName>
        <fullName evidence="1">Ribosomal RNA small subunit methyltransferase H</fullName>
        <ecNumber evidence="1">2.1.1.199</ecNumber>
    </recommendedName>
    <alternativeName>
        <fullName evidence="1">16S rRNA m(4)C1402 methyltransferase</fullName>
    </alternativeName>
    <alternativeName>
        <fullName evidence="1">rRNA (cytosine-N(4)-)-methyltransferase RsmH</fullName>
    </alternativeName>
</protein>
<gene>
    <name evidence="1" type="primary">rsmH</name>
    <name type="synonym">mraW</name>
    <name type="ordered locus">BCQ_3704</name>
</gene>
<accession>B9IVZ5</accession>
<name>RSMH_BACCQ</name>
<evidence type="ECO:0000255" key="1">
    <source>
        <dbReference type="HAMAP-Rule" id="MF_01007"/>
    </source>
</evidence>
<keyword id="KW-0963">Cytoplasm</keyword>
<keyword id="KW-0489">Methyltransferase</keyword>
<keyword id="KW-0698">rRNA processing</keyword>
<keyword id="KW-0949">S-adenosyl-L-methionine</keyword>
<keyword id="KW-0808">Transferase</keyword>
<proteinExistence type="inferred from homology"/>
<organism>
    <name type="scientific">Bacillus cereus (strain Q1)</name>
    <dbReference type="NCBI Taxonomy" id="361100"/>
    <lineage>
        <taxon>Bacteria</taxon>
        <taxon>Bacillati</taxon>
        <taxon>Bacillota</taxon>
        <taxon>Bacilli</taxon>
        <taxon>Bacillales</taxon>
        <taxon>Bacillaceae</taxon>
        <taxon>Bacillus</taxon>
        <taxon>Bacillus cereus group</taxon>
    </lineage>
</organism>
<sequence length="310" mass="34901">MFNHVTVLLKETVDGLDIKPGGTYVDCTLGGGGHSSYLLSQLTEGGRLIAFDQDEIAIQNAKEKFSSYGEQFITVKSNFRYLSEKLQELGITEVDGILFDLGVSSPQLDTPERGFSYHHDAPLDMRMDQDAPLTAYDVVNSWSYEQLVRIFFQYGEEKFSKQIARKIEAYRENKAIETTGELVELIKEGIPAPARRTGGHPAKRVFQAIRIAVNDELKVFEEALESAIEMVKPGGRVSVITFHSLEDRICKTTFKRNSTTPQLPPGLPIIPDEFKPKLKLITRKPILPSDIELEENNRARSAKLRIAEKR</sequence>